<accession>A3PXU3</accession>
<name>ACYP_MYCSJ</name>
<dbReference type="EC" id="3.6.1.7"/>
<dbReference type="EMBL" id="CP000580">
    <property type="protein sequence ID" value="ABN97720.1"/>
    <property type="molecule type" value="Genomic_DNA"/>
</dbReference>
<dbReference type="SMR" id="A3PXU3"/>
<dbReference type="KEGG" id="mjl:Mjls_1932"/>
<dbReference type="HOGENOM" id="CLU_141932_3_0_11"/>
<dbReference type="BioCyc" id="MSP164757:G1G8C-1952-MONOMER"/>
<dbReference type="GO" id="GO:0003998">
    <property type="term" value="F:acylphosphatase activity"/>
    <property type="evidence" value="ECO:0007669"/>
    <property type="project" value="UniProtKB-EC"/>
</dbReference>
<dbReference type="Gene3D" id="3.30.70.100">
    <property type="match status" value="1"/>
</dbReference>
<dbReference type="InterPro" id="IPR020456">
    <property type="entry name" value="Acylphosphatase"/>
</dbReference>
<dbReference type="InterPro" id="IPR001792">
    <property type="entry name" value="Acylphosphatase-like_dom"/>
</dbReference>
<dbReference type="InterPro" id="IPR036046">
    <property type="entry name" value="Acylphosphatase-like_dom_sf"/>
</dbReference>
<dbReference type="InterPro" id="IPR017968">
    <property type="entry name" value="Acylphosphatase_CS"/>
</dbReference>
<dbReference type="NCBIfam" id="NF010997">
    <property type="entry name" value="PRK14422.1"/>
    <property type="match status" value="1"/>
</dbReference>
<dbReference type="PANTHER" id="PTHR47268">
    <property type="entry name" value="ACYLPHOSPHATASE"/>
    <property type="match status" value="1"/>
</dbReference>
<dbReference type="PANTHER" id="PTHR47268:SF4">
    <property type="entry name" value="ACYLPHOSPHATASE"/>
    <property type="match status" value="1"/>
</dbReference>
<dbReference type="Pfam" id="PF00708">
    <property type="entry name" value="Acylphosphatase"/>
    <property type="match status" value="1"/>
</dbReference>
<dbReference type="SUPFAM" id="SSF54975">
    <property type="entry name" value="Acylphosphatase/BLUF domain-like"/>
    <property type="match status" value="1"/>
</dbReference>
<dbReference type="PROSITE" id="PS00150">
    <property type="entry name" value="ACYLPHOSPHATASE_1"/>
    <property type="match status" value="1"/>
</dbReference>
<dbReference type="PROSITE" id="PS00151">
    <property type="entry name" value="ACYLPHOSPHATASE_2"/>
    <property type="match status" value="1"/>
</dbReference>
<dbReference type="PROSITE" id="PS51160">
    <property type="entry name" value="ACYLPHOSPHATASE_3"/>
    <property type="match status" value="1"/>
</dbReference>
<gene>
    <name type="primary">acyP</name>
    <name type="ordered locus">Mjls_1932</name>
</gene>
<sequence length="94" mass="10474">MSAEPEVRLTAWVHGRVQGVGFRWWTRSRALELGLTGFAANKPDGRVQVVAQGSREECERLLGLLEGGDTPGRVDKVIADWSDAREQITGFHER</sequence>
<reference key="1">
    <citation type="submission" date="2007-02" db="EMBL/GenBank/DDBJ databases">
        <title>Complete sequence of Mycobacterium sp. JLS.</title>
        <authorList>
            <consortium name="US DOE Joint Genome Institute"/>
            <person name="Copeland A."/>
            <person name="Lucas S."/>
            <person name="Lapidus A."/>
            <person name="Barry K."/>
            <person name="Detter J.C."/>
            <person name="Glavina del Rio T."/>
            <person name="Hammon N."/>
            <person name="Israni S."/>
            <person name="Dalin E."/>
            <person name="Tice H."/>
            <person name="Pitluck S."/>
            <person name="Chain P."/>
            <person name="Malfatti S."/>
            <person name="Shin M."/>
            <person name="Vergez L."/>
            <person name="Schmutz J."/>
            <person name="Larimer F."/>
            <person name="Land M."/>
            <person name="Hauser L."/>
            <person name="Kyrpides N."/>
            <person name="Mikhailova N."/>
            <person name="Miller C.D."/>
            <person name="Anderson A.J."/>
            <person name="Sims R.C."/>
            <person name="Richardson P."/>
        </authorList>
    </citation>
    <scope>NUCLEOTIDE SEQUENCE [LARGE SCALE GENOMIC DNA]</scope>
    <source>
        <strain>JLS</strain>
    </source>
</reference>
<evidence type="ECO:0000255" key="1">
    <source>
        <dbReference type="PROSITE-ProRule" id="PRU00520"/>
    </source>
</evidence>
<evidence type="ECO:0000305" key="2"/>
<organism>
    <name type="scientific">Mycobacterium sp. (strain JLS)</name>
    <dbReference type="NCBI Taxonomy" id="164757"/>
    <lineage>
        <taxon>Bacteria</taxon>
        <taxon>Bacillati</taxon>
        <taxon>Actinomycetota</taxon>
        <taxon>Actinomycetes</taxon>
        <taxon>Mycobacteriales</taxon>
        <taxon>Mycobacteriaceae</taxon>
        <taxon>Mycobacterium</taxon>
    </lineage>
</organism>
<keyword id="KW-0378">Hydrolase</keyword>
<proteinExistence type="inferred from homology"/>
<comment type="catalytic activity">
    <reaction>
        <text>an acyl phosphate + H2O = a carboxylate + phosphate + H(+)</text>
        <dbReference type="Rhea" id="RHEA:14965"/>
        <dbReference type="ChEBI" id="CHEBI:15377"/>
        <dbReference type="ChEBI" id="CHEBI:15378"/>
        <dbReference type="ChEBI" id="CHEBI:29067"/>
        <dbReference type="ChEBI" id="CHEBI:43474"/>
        <dbReference type="ChEBI" id="CHEBI:59918"/>
        <dbReference type="EC" id="3.6.1.7"/>
    </reaction>
</comment>
<comment type="similarity">
    <text evidence="2">Belongs to the acylphosphatase family.</text>
</comment>
<protein>
    <recommendedName>
        <fullName>Acylphosphatase</fullName>
        <ecNumber>3.6.1.7</ecNumber>
    </recommendedName>
    <alternativeName>
        <fullName>Acylphosphate phosphohydrolase</fullName>
    </alternativeName>
</protein>
<feature type="chain" id="PRO_0000326751" description="Acylphosphatase">
    <location>
        <begin position="1"/>
        <end position="94"/>
    </location>
</feature>
<feature type="domain" description="Acylphosphatase-like" evidence="1">
    <location>
        <begin position="8"/>
        <end position="94"/>
    </location>
</feature>
<feature type="active site" evidence="1">
    <location>
        <position position="23"/>
    </location>
</feature>
<feature type="active site" evidence="1">
    <location>
        <position position="41"/>
    </location>
</feature>